<organism>
    <name type="scientific">Streptococcus suis (strain 98HAH33)</name>
    <dbReference type="NCBI Taxonomy" id="391296"/>
    <lineage>
        <taxon>Bacteria</taxon>
        <taxon>Bacillati</taxon>
        <taxon>Bacillota</taxon>
        <taxon>Bacilli</taxon>
        <taxon>Lactobacillales</taxon>
        <taxon>Streptococcaceae</taxon>
        <taxon>Streptococcus</taxon>
    </lineage>
</organism>
<accession>A4W0T4</accession>
<sequence length="327" mass="35924">MFNETPVFDYEDIQLIPNKCIINSRSEADTTVTLGKYSFKLPVVPANMQTIIDEDVAEMLAKDGYFYIMHRFDEAGRIPFIKRMHEQGLIASISVGVKEYEYEFVTSLKADAPEFITIDIAHGHAESVIKMIQHIKKELPETFVIAGNVGTPEAVRELENAGADATKVGIGPGKVCITKVKTGFGTGGWQLAALRWCAKAARKPIIADGGIRTHGDIAKSIRFGASMVMIGSLFAGHIESPGKTIEVDGEKFKEYYGSASEYQKGAYKNVEGKKILLPAKGHLKDTLVEMEQDLQSSISYAGGRDITSLKHVDYVIVKNSIWNGDSI</sequence>
<feature type="chain" id="PRO_0000296656" description="GMP reductase">
    <location>
        <begin position="1"/>
        <end position="327"/>
    </location>
</feature>
<feature type="active site" description="Thioimidate intermediate" evidence="1">
    <location>
        <position position="176"/>
    </location>
</feature>
<feature type="binding site" evidence="1">
    <location>
        <begin position="205"/>
        <end position="228"/>
    </location>
    <ligand>
        <name>NADP(+)</name>
        <dbReference type="ChEBI" id="CHEBI:58349"/>
    </ligand>
</feature>
<comment type="function">
    <text evidence="1">Catalyzes the irreversible NADPH-dependent deamination of GMP to IMP. It functions in the conversion of nucleobase, nucleoside and nucleotide derivatives of G to A nucleotides, and in maintaining the intracellular balance of A and G nucleotides.</text>
</comment>
<comment type="catalytic activity">
    <reaction evidence="1">
        <text>IMP + NH4(+) + NADP(+) = GMP + NADPH + 2 H(+)</text>
        <dbReference type="Rhea" id="RHEA:17185"/>
        <dbReference type="ChEBI" id="CHEBI:15378"/>
        <dbReference type="ChEBI" id="CHEBI:28938"/>
        <dbReference type="ChEBI" id="CHEBI:57783"/>
        <dbReference type="ChEBI" id="CHEBI:58053"/>
        <dbReference type="ChEBI" id="CHEBI:58115"/>
        <dbReference type="ChEBI" id="CHEBI:58349"/>
        <dbReference type="EC" id="1.7.1.7"/>
    </reaction>
</comment>
<comment type="similarity">
    <text evidence="1">Belongs to the IMPDH/GMPR family. GuaC type 2 subfamily.</text>
</comment>
<comment type="sequence caution" evidence="2">
    <conflict type="erroneous initiation">
        <sequence resource="EMBL-CDS" id="ABP91973"/>
    </conflict>
</comment>
<proteinExistence type="inferred from homology"/>
<name>GUAC_STRS2</name>
<evidence type="ECO:0000255" key="1">
    <source>
        <dbReference type="HAMAP-Rule" id="MF_01511"/>
    </source>
</evidence>
<evidence type="ECO:0000305" key="2"/>
<gene>
    <name evidence="1" type="primary">guaC</name>
    <name type="ordered locus">SSU98_0815</name>
</gene>
<reference key="1">
    <citation type="journal article" date="2007" name="PLoS ONE">
        <title>A glimpse of streptococcal toxic shock syndrome from comparative genomics of S. suis 2 Chinese isolates.</title>
        <authorList>
            <person name="Chen C."/>
            <person name="Tang J."/>
            <person name="Dong W."/>
            <person name="Wang C."/>
            <person name="Feng Y."/>
            <person name="Wang J."/>
            <person name="Zheng F."/>
            <person name="Pan X."/>
            <person name="Liu D."/>
            <person name="Li M."/>
            <person name="Song Y."/>
            <person name="Zhu X."/>
            <person name="Sun H."/>
            <person name="Feng T."/>
            <person name="Guo Z."/>
            <person name="Ju A."/>
            <person name="Ge J."/>
            <person name="Dong Y."/>
            <person name="Sun W."/>
            <person name="Jiang Y."/>
            <person name="Wang J."/>
            <person name="Yan J."/>
            <person name="Yang H."/>
            <person name="Wang X."/>
            <person name="Gao G.F."/>
            <person name="Yang R."/>
            <person name="Wang J."/>
            <person name="Yu J."/>
        </authorList>
    </citation>
    <scope>NUCLEOTIDE SEQUENCE [LARGE SCALE GENOMIC DNA]</scope>
    <source>
        <strain>98HAH33</strain>
    </source>
</reference>
<dbReference type="EC" id="1.7.1.7" evidence="1"/>
<dbReference type="EMBL" id="CP000408">
    <property type="protein sequence ID" value="ABP91973.1"/>
    <property type="status" value="ALT_INIT"/>
    <property type="molecule type" value="Genomic_DNA"/>
</dbReference>
<dbReference type="SMR" id="A4W0T4"/>
<dbReference type="KEGG" id="ssv:SSU98_0815"/>
<dbReference type="HOGENOM" id="CLU_022552_5_0_9"/>
<dbReference type="GO" id="GO:0005829">
    <property type="term" value="C:cytosol"/>
    <property type="evidence" value="ECO:0007669"/>
    <property type="project" value="TreeGrafter"/>
</dbReference>
<dbReference type="GO" id="GO:1902560">
    <property type="term" value="C:GMP reductase complex"/>
    <property type="evidence" value="ECO:0007669"/>
    <property type="project" value="InterPro"/>
</dbReference>
<dbReference type="GO" id="GO:0003920">
    <property type="term" value="F:GMP reductase activity"/>
    <property type="evidence" value="ECO:0007669"/>
    <property type="project" value="UniProtKB-UniRule"/>
</dbReference>
<dbReference type="GO" id="GO:0006163">
    <property type="term" value="P:purine nucleotide metabolic process"/>
    <property type="evidence" value="ECO:0007669"/>
    <property type="project" value="UniProtKB-UniRule"/>
</dbReference>
<dbReference type="CDD" id="cd00381">
    <property type="entry name" value="IMPDH"/>
    <property type="match status" value="1"/>
</dbReference>
<dbReference type="FunFam" id="3.20.20.70:FF:000079">
    <property type="entry name" value="GMP reductase"/>
    <property type="match status" value="1"/>
</dbReference>
<dbReference type="Gene3D" id="3.20.20.70">
    <property type="entry name" value="Aldolase class I"/>
    <property type="match status" value="1"/>
</dbReference>
<dbReference type="HAMAP" id="MF_01511">
    <property type="entry name" value="GMP_reduct_type2"/>
    <property type="match status" value="1"/>
</dbReference>
<dbReference type="InterPro" id="IPR013785">
    <property type="entry name" value="Aldolase_TIM"/>
</dbReference>
<dbReference type="InterPro" id="IPR050139">
    <property type="entry name" value="GMP_reductase"/>
</dbReference>
<dbReference type="InterPro" id="IPR005994">
    <property type="entry name" value="GuaC_type_2"/>
</dbReference>
<dbReference type="InterPro" id="IPR015875">
    <property type="entry name" value="IMP_DH/GMP_Rdtase_CS"/>
</dbReference>
<dbReference type="InterPro" id="IPR001093">
    <property type="entry name" value="IMP_DH_GMPRt"/>
</dbReference>
<dbReference type="NCBIfam" id="TIGR01306">
    <property type="entry name" value="GMP_reduct_2"/>
    <property type="match status" value="1"/>
</dbReference>
<dbReference type="NCBIfam" id="NF003966">
    <property type="entry name" value="PRK05458.1"/>
    <property type="match status" value="1"/>
</dbReference>
<dbReference type="PANTHER" id="PTHR43170">
    <property type="entry name" value="GMP REDUCTASE"/>
    <property type="match status" value="1"/>
</dbReference>
<dbReference type="PANTHER" id="PTHR43170:SF5">
    <property type="entry name" value="GMP REDUCTASE"/>
    <property type="match status" value="1"/>
</dbReference>
<dbReference type="Pfam" id="PF00478">
    <property type="entry name" value="IMPDH"/>
    <property type="match status" value="1"/>
</dbReference>
<dbReference type="PIRSF" id="PIRSF036500">
    <property type="entry name" value="GMP_red_Firmic"/>
    <property type="match status" value="1"/>
</dbReference>
<dbReference type="SMART" id="SM01240">
    <property type="entry name" value="IMPDH"/>
    <property type="match status" value="1"/>
</dbReference>
<dbReference type="SUPFAM" id="SSF51412">
    <property type="entry name" value="Inosine monophosphate dehydrogenase (IMPDH)"/>
    <property type="match status" value="1"/>
</dbReference>
<dbReference type="PROSITE" id="PS00487">
    <property type="entry name" value="IMP_DH_GMP_RED"/>
    <property type="match status" value="1"/>
</dbReference>
<protein>
    <recommendedName>
        <fullName evidence="1">GMP reductase</fullName>
        <ecNumber evidence="1">1.7.1.7</ecNumber>
    </recommendedName>
    <alternativeName>
        <fullName evidence="1">Guanosine 5'-monophosphate oxidoreductase</fullName>
        <shortName evidence="1">Guanosine monophosphate reductase</shortName>
    </alternativeName>
</protein>
<keyword id="KW-0521">NADP</keyword>
<keyword id="KW-0560">Oxidoreductase</keyword>